<feature type="initiator methionine" description="Removed" evidence="2">
    <location>
        <position position="1"/>
    </location>
</feature>
<feature type="chain" id="PRO_0000191306" description="Cytochrome c oxidase subunit 6C-1">
    <location>
        <begin position="2"/>
        <end position="76"/>
    </location>
</feature>
<feature type="topological domain" description="Mitochondrial matrix" evidence="1">
    <location>
        <begin position="2"/>
        <end position="10"/>
    </location>
</feature>
<feature type="transmembrane region" description="Helical" evidence="1">
    <location>
        <begin position="11"/>
        <end position="51"/>
    </location>
</feature>
<feature type="topological domain" description="Mitochondrial intermembrane" evidence="1">
    <location>
        <begin position="52"/>
        <end position="76"/>
    </location>
</feature>
<feature type="sequence conflict" description="In Ref. 2; AA sequence." evidence="3" ref="2">
    <original>SL</original>
    <variation>LK</variation>
    <location>
        <begin position="2"/>
        <end position="3"/>
    </location>
</feature>
<feature type="sequence conflict" description="In Ref. 2; AA sequence." evidence="3" ref="2">
    <original>K</original>
    <variation>KK</variation>
    <location>
        <position position="57"/>
    </location>
</feature>
<feature type="sequence conflict" description="In Ref. 2; AA sequence." evidence="3" ref="2">
    <original>E</original>
    <variation>K</variation>
    <location>
        <position position="76"/>
    </location>
</feature>
<comment type="function">
    <text evidence="1">Component of the cytochrome c oxidase, the last enzyme in the mitochondrial electron transport chain which drives oxidative phosphorylation. The respiratory chain contains 3 multisubunit complexes succinate dehydrogenase (complex II, CII), ubiquinol-cytochrome c oxidoreductase (cytochrome b-c1 complex, complex III, CIII) and cytochrome c oxidase (complex IV, CIV), that cooperate to transfer electrons derived from NADH and succinate to molecular oxygen, creating an electrochemical gradient over the inner membrane that drives transmembrane transport and the ATP synthase. Cytochrome c oxidase is the component of the respiratory chain that catalyzes the reduction of oxygen to water. Electrons originating from reduced cytochrome c in the intermembrane space (IMS) are transferred via the dinuclear copper A center (CU(A)) of subunit 2 and heme A of subunit 1 to the active site in subunit 1, a binuclear center (BNC) formed by heme A3 and copper B (CU(B)). The BNC reduces molecular oxygen to 2 water molecules using 4 electrons from cytochrome c in the IMS and 4 protons from the mitochondrial matrix.</text>
</comment>
<comment type="pathway">
    <text evidence="1">Energy metabolism; oxidative phosphorylation.</text>
</comment>
<comment type="subunit">
    <text evidence="1">Component of the cytochrome c oxidase (complex IV, CIV), a multisubunit enzyme composed of 14 subunits. The complex is composed of a catalytic core of 3 subunits MT-CO1, MT-CO2 and MT-CO3, encoded in the mitochondrial DNA, and 11 supernumerary subunits COX4I, COX5A, COX5B, COX6A, COX6B, COX6C, COX7A, COX7B, COX7C, COX8 and NDUFA4, which are encoded in the nuclear genome. The complex exists as a monomer or a dimer and forms supercomplexes (SCs) in the inner mitochondrial membrane with NADH-ubiquinone oxidoreductase (complex I, CI) and ubiquinol-cytochrome c oxidoreductase (cytochrome b-c1 complex, complex III, CIII), resulting in different assemblies (supercomplex SCI(1)III(2)IV(1) and megacomplex MCI(2)III(2)IV(2)).</text>
</comment>
<comment type="subcellular location">
    <subcellularLocation>
        <location evidence="1">Mitochondrion inner membrane</location>
        <topology evidence="1">Single-pass membrane protein</topology>
    </subcellularLocation>
</comment>
<comment type="similarity">
    <text evidence="3">Belongs to the cytochrome c oxidase subunit 6c family.</text>
</comment>
<keyword id="KW-0903">Direct protein sequencing</keyword>
<keyword id="KW-0472">Membrane</keyword>
<keyword id="KW-0496">Mitochondrion</keyword>
<keyword id="KW-0999">Mitochondrion inner membrane</keyword>
<keyword id="KW-0812">Transmembrane</keyword>
<keyword id="KW-1133">Transmembrane helix</keyword>
<accession>P80977</accession>
<accession>Q71SZ9</accession>
<name>CX6C1_THUOB</name>
<proteinExistence type="evidence at protein level"/>
<reference key="1">
    <citation type="submission" date="2000-04" db="EMBL/GenBank/DDBJ databases">
        <title>Evolution of nuclear coded cytochrome c oxidase subunit VIc of fishes.</title>
        <authorList>
            <person name="Weisheit G."/>
            <person name="Huettemann M."/>
            <person name="Kadenbach B."/>
        </authorList>
    </citation>
    <scope>NUCLEOTIDE SEQUENCE [MRNA]</scope>
</reference>
<reference key="2">
    <citation type="journal article" date="1997" name="Eur. J. Biochem.">
        <title>The subunit structure of cytochrome-c oxidase from tuna heart and liver.</title>
        <authorList>
            <person name="Arnold S."/>
            <person name="Lee I."/>
            <person name="Kim M."/>
            <person name="Song E."/>
            <person name="Linder D."/>
            <person name="Lottspeich F."/>
            <person name="Kadenbach B."/>
        </authorList>
    </citation>
    <scope>PROTEIN SEQUENCE OF 2-14; 35-43 AND 51-76</scope>
    <source>
        <tissue>Heart</tissue>
        <tissue>Liver</tissue>
    </source>
</reference>
<sequence>MSLAKPAMRGLLGKRLRFHLPIAFTLSLVAALGFKYGVTEPRKQAYADFYKQYDAVKDFNAMREAGIFESVRPSGE</sequence>
<organism>
    <name type="scientific">Thunnus obesus</name>
    <name type="common">Bigeye tuna</name>
    <dbReference type="NCBI Taxonomy" id="8241"/>
    <lineage>
        <taxon>Eukaryota</taxon>
        <taxon>Metazoa</taxon>
        <taxon>Chordata</taxon>
        <taxon>Craniata</taxon>
        <taxon>Vertebrata</taxon>
        <taxon>Euteleostomi</taxon>
        <taxon>Actinopterygii</taxon>
        <taxon>Neopterygii</taxon>
        <taxon>Teleostei</taxon>
        <taxon>Neoteleostei</taxon>
        <taxon>Acanthomorphata</taxon>
        <taxon>Pelagiaria</taxon>
        <taxon>Scombriformes</taxon>
        <taxon>Scombridae</taxon>
        <taxon>Thunnus</taxon>
    </lineage>
</organism>
<dbReference type="EMBL" id="AF255348">
    <property type="protein sequence ID" value="AAQ14272.1"/>
    <property type="molecule type" value="mRNA"/>
</dbReference>
<dbReference type="PIR" id="S77986">
    <property type="entry name" value="S77986"/>
</dbReference>
<dbReference type="SMR" id="P80977"/>
<dbReference type="UniPathway" id="UPA00705"/>
<dbReference type="GO" id="GO:0005743">
    <property type="term" value="C:mitochondrial inner membrane"/>
    <property type="evidence" value="ECO:0007669"/>
    <property type="project" value="UniProtKB-SubCell"/>
</dbReference>
<dbReference type="GO" id="GO:0006119">
    <property type="term" value="P:oxidative phosphorylation"/>
    <property type="evidence" value="ECO:0007669"/>
    <property type="project" value="UniProtKB-UniPathway"/>
</dbReference>
<dbReference type="CDD" id="cd22901">
    <property type="entry name" value="CcO_VIc"/>
    <property type="match status" value="1"/>
</dbReference>
<dbReference type="Gene3D" id="4.10.93.10">
    <property type="entry name" value="Mitochondrial cytochrome c oxidase subunit VIc/VIIs"/>
    <property type="match status" value="1"/>
</dbReference>
<dbReference type="InterPro" id="IPR051389">
    <property type="entry name" value="Cytochrome_c_oxidase_VIc"/>
</dbReference>
<dbReference type="InterPro" id="IPR034884">
    <property type="entry name" value="Cytochrome_c_oxidase_VIc/VIIs"/>
</dbReference>
<dbReference type="InterPro" id="IPR037169">
    <property type="entry name" value="Cytochrome_c_oxidase_VIc_sf"/>
</dbReference>
<dbReference type="PANTHER" id="PTHR48416">
    <property type="entry name" value="CYTOCHROME C OXIDASE SUBUNIT 6C"/>
    <property type="match status" value="1"/>
</dbReference>
<dbReference type="PANTHER" id="PTHR48416:SF1">
    <property type="entry name" value="CYTOCHROME C OXIDASE SUBUNIT 6C"/>
    <property type="match status" value="1"/>
</dbReference>
<dbReference type="Pfam" id="PF02937">
    <property type="entry name" value="COX6C"/>
    <property type="match status" value="1"/>
</dbReference>
<dbReference type="SUPFAM" id="SSF81415">
    <property type="entry name" value="Mitochondrial cytochrome c oxidase subunit VIc"/>
    <property type="match status" value="1"/>
</dbReference>
<evidence type="ECO:0000250" key="1">
    <source>
        <dbReference type="UniProtKB" id="P04038"/>
    </source>
</evidence>
<evidence type="ECO:0000269" key="2">
    <source>
    </source>
</evidence>
<evidence type="ECO:0000305" key="3"/>
<protein>
    <recommendedName>
        <fullName>Cytochrome c oxidase subunit 6C-1</fullName>
    </recommendedName>
    <alternativeName>
        <fullName>Cytochrome c oxidase polypeptide VIc-1</fullName>
    </alternativeName>
</protein>